<reference key="1">
    <citation type="journal article" date="2003" name="Proc. Natl. Acad. Sci. U.S.A.">
        <title>The complete genome sequence of Mycobacterium bovis.</title>
        <authorList>
            <person name="Garnier T."/>
            <person name="Eiglmeier K."/>
            <person name="Camus J.-C."/>
            <person name="Medina N."/>
            <person name="Mansoor H."/>
            <person name="Pryor M."/>
            <person name="Duthoy S."/>
            <person name="Grondin S."/>
            <person name="Lacroix C."/>
            <person name="Monsempe C."/>
            <person name="Simon S."/>
            <person name="Harris B."/>
            <person name="Atkin R."/>
            <person name="Doggett J."/>
            <person name="Mayes R."/>
            <person name="Keating L."/>
            <person name="Wheeler P.R."/>
            <person name="Parkhill J."/>
            <person name="Barrell B.G."/>
            <person name="Cole S.T."/>
            <person name="Gordon S.V."/>
            <person name="Hewinson R.G."/>
        </authorList>
    </citation>
    <scope>NUCLEOTIDE SEQUENCE [LARGE SCALE GENOMIC DNA]</scope>
    <source>
        <strain>ATCC BAA-935 / AF2122/97</strain>
    </source>
</reference>
<reference key="2">
    <citation type="journal article" date="2017" name="Genome Announc.">
        <title>Updated reference genome sequence and annotation of Mycobacterium bovis AF2122/97.</title>
        <authorList>
            <person name="Malone K.M."/>
            <person name="Farrell D."/>
            <person name="Stuber T.P."/>
            <person name="Schubert O.T."/>
            <person name="Aebersold R."/>
            <person name="Robbe-Austerman S."/>
            <person name="Gordon S.V."/>
        </authorList>
    </citation>
    <scope>NUCLEOTIDE SEQUENCE [LARGE SCALE GENOMIC DNA]</scope>
    <scope>GENOME REANNOTATION</scope>
    <source>
        <strain>ATCC BAA-935 / AF2122/97</strain>
    </source>
</reference>
<organism>
    <name type="scientific">Mycobacterium bovis (strain ATCC BAA-935 / AF2122/97)</name>
    <dbReference type="NCBI Taxonomy" id="233413"/>
    <lineage>
        <taxon>Bacteria</taxon>
        <taxon>Bacillati</taxon>
        <taxon>Actinomycetota</taxon>
        <taxon>Actinomycetes</taxon>
        <taxon>Mycobacteriales</taxon>
        <taxon>Mycobacteriaceae</taxon>
        <taxon>Mycobacterium</taxon>
        <taxon>Mycobacterium tuberculosis complex</taxon>
    </lineage>
</organism>
<feature type="chain" id="PRO_0000096275" description="Protein MbtH">
    <location>
        <begin position="1"/>
        <end position="71"/>
    </location>
</feature>
<keyword id="KW-1185">Reference proteome</keyword>
<dbReference type="EMBL" id="LT708304">
    <property type="protein sequence ID" value="SIU01010.1"/>
    <property type="molecule type" value="Genomic_DNA"/>
</dbReference>
<dbReference type="RefSeq" id="NP_856047.1">
    <property type="nucleotide sequence ID" value="NC_002945.3"/>
</dbReference>
<dbReference type="RefSeq" id="WP_003412265.1">
    <property type="nucleotide sequence ID" value="NC_002945.4"/>
</dbReference>
<dbReference type="BMRB" id="P59965"/>
<dbReference type="SMR" id="P59965"/>
<dbReference type="GeneID" id="45426362"/>
<dbReference type="KEGG" id="mbo:BQ2027_MB2398C"/>
<dbReference type="PATRIC" id="fig|233413.5.peg.2635"/>
<dbReference type="Proteomes" id="UP000001419">
    <property type="component" value="Chromosome"/>
</dbReference>
<dbReference type="GO" id="GO:0005829">
    <property type="term" value="C:cytosol"/>
    <property type="evidence" value="ECO:0007669"/>
    <property type="project" value="TreeGrafter"/>
</dbReference>
<dbReference type="GO" id="GO:0019290">
    <property type="term" value="P:siderophore biosynthetic process"/>
    <property type="evidence" value="ECO:0007669"/>
    <property type="project" value="TreeGrafter"/>
</dbReference>
<dbReference type="FunFam" id="3.90.820.10:FF:000002">
    <property type="entry name" value="MbtH family protein"/>
    <property type="match status" value="1"/>
</dbReference>
<dbReference type="Gene3D" id="3.90.820.10">
    <property type="entry name" value="Structural Genomics, Unknown Function 30-nov-00 1gh9 Mol_id"/>
    <property type="match status" value="1"/>
</dbReference>
<dbReference type="InterPro" id="IPR005153">
    <property type="entry name" value="MbtH-like_dom"/>
</dbReference>
<dbReference type="InterPro" id="IPR038020">
    <property type="entry name" value="MbtH-like_sf"/>
</dbReference>
<dbReference type="InterPro" id="IPR037407">
    <property type="entry name" value="MLP_fam"/>
</dbReference>
<dbReference type="PANTHER" id="PTHR38444">
    <property type="entry name" value="ENTEROBACTIN BIOSYNTHESIS PROTEIN YBDZ"/>
    <property type="match status" value="1"/>
</dbReference>
<dbReference type="PANTHER" id="PTHR38444:SF1">
    <property type="entry name" value="ENTEROBACTIN BIOSYNTHESIS PROTEIN YBDZ"/>
    <property type="match status" value="1"/>
</dbReference>
<dbReference type="Pfam" id="PF03621">
    <property type="entry name" value="MbtH"/>
    <property type="match status" value="1"/>
</dbReference>
<dbReference type="SMART" id="SM00923">
    <property type="entry name" value="MbtH"/>
    <property type="match status" value="1"/>
</dbReference>
<dbReference type="SUPFAM" id="SSF160582">
    <property type="entry name" value="MbtH-like"/>
    <property type="match status" value="1"/>
</dbReference>
<protein>
    <recommendedName>
        <fullName>Protein MbtH</fullName>
    </recommendedName>
</protein>
<sequence length="71" mass="8054">MSTNPFDDDNGAFFVLVNDEDQHSLWPVFADIPAGWRVVHGEASRAACLDYVEKNWTDLRPKSLRDAMAED</sequence>
<proteinExistence type="inferred from homology"/>
<accession>P59965</accession>
<accession>A0A1R3Y114</accession>
<accession>X2BKW6</accession>
<gene>
    <name type="primary">mbtH</name>
    <name type="ordered locus">BQ2027_MB2398C</name>
</gene>
<name>MBTH_MYCBO</name>
<comment type="function">
    <text evidence="1">Could be involved in mycobactin synthesis.</text>
</comment>
<comment type="similarity">
    <text evidence="2">To M.tuberculosis MbtH.</text>
</comment>
<evidence type="ECO:0000250" key="1"/>
<evidence type="ECO:0000305" key="2"/>